<organism>
    <name type="scientific">Bos taurus</name>
    <name type="common">Bovine</name>
    <dbReference type="NCBI Taxonomy" id="9913"/>
    <lineage>
        <taxon>Eukaryota</taxon>
        <taxon>Metazoa</taxon>
        <taxon>Chordata</taxon>
        <taxon>Craniata</taxon>
        <taxon>Vertebrata</taxon>
        <taxon>Euteleostomi</taxon>
        <taxon>Mammalia</taxon>
        <taxon>Eutheria</taxon>
        <taxon>Laurasiatheria</taxon>
        <taxon>Artiodactyla</taxon>
        <taxon>Ruminantia</taxon>
        <taxon>Pecora</taxon>
        <taxon>Bovidae</taxon>
        <taxon>Bovinae</taxon>
        <taxon>Bos</taxon>
    </lineage>
</organism>
<comment type="function">
    <text evidence="1">Binds and activates TIE2 receptor by inducing its tyrosine phosphorylation. Implicated in endothelial developmental processes later and distinct from that of VEGF. Appears to play a crucial role in mediating reciprocal interactions between the endothelium and surrounding matrix and mesenchyme. Mediates blood vessel maturation/stability. It may play an important role in the heart early development (By similarity).</text>
</comment>
<comment type="subunit">
    <text evidence="2 3">Homooligomer (By similarity). Interacts with TEK/TIE2 (By similarity). Interacts with SVEP1/polydom (By similarity). Interacts with THBD; this interaction significantly inhibits the generation of activated PC and TAFIa/CPB2 by the thrombin/thrombomodulin complex (By similarity).</text>
</comment>
<comment type="subcellular location">
    <subcellularLocation>
        <location evidence="2">Secreted</location>
    </subcellularLocation>
</comment>
<comment type="developmental stage">
    <text evidence="6">Expressed in the ovarian corpus luteum throughout the ovarian reproductive cycle.</text>
</comment>
<feature type="signal peptide" evidence="4">
    <location>
        <begin position="1"/>
        <end position="15"/>
    </location>
</feature>
<feature type="chain" id="PRO_0000009109" description="Angiopoietin-1">
    <location>
        <begin position="16"/>
        <end position="497"/>
    </location>
</feature>
<feature type="domain" description="Fibrinogen C-terminal" evidence="5">
    <location>
        <begin position="276"/>
        <end position="496"/>
    </location>
</feature>
<feature type="coiled-coil region" evidence="4">
    <location>
        <begin position="153"/>
        <end position="261"/>
    </location>
</feature>
<feature type="glycosylation site" description="N-linked (GlcNAc...) asparagine" evidence="4">
    <location>
        <position position="92"/>
    </location>
</feature>
<feature type="glycosylation site" description="N-linked (GlcNAc...) asparagine" evidence="4">
    <location>
        <position position="122"/>
    </location>
</feature>
<feature type="glycosylation site" description="N-linked (GlcNAc...) asparagine" evidence="4">
    <location>
        <position position="154"/>
    </location>
</feature>
<feature type="glycosylation site" description="N-linked (GlcNAc...) asparagine" evidence="4">
    <location>
        <position position="243"/>
    </location>
</feature>
<feature type="glycosylation site" description="N-linked (GlcNAc...) asparagine" evidence="4">
    <location>
        <position position="294"/>
    </location>
</feature>
<feature type="disulfide bond" evidence="5">
    <location>
        <begin position="285"/>
        <end position="314"/>
    </location>
</feature>
<feature type="disulfide bond" evidence="5">
    <location>
        <begin position="438"/>
        <end position="451"/>
    </location>
</feature>
<feature type="sequence conflict" description="In Ref. 2; AAC61872." evidence="7" ref="2">
    <original>KE</original>
    <variation>RK</variation>
    <location>
        <begin position="276"/>
        <end position="277"/>
    </location>
</feature>
<feature type="sequence conflict" description="In Ref. 2; AAC61872." evidence="7" ref="2">
    <original>N</original>
    <variation>D</variation>
    <location>
        <position position="315"/>
    </location>
</feature>
<gene>
    <name type="primary">ANGPT1</name>
    <name type="synonym">ANG1</name>
</gene>
<sequence length="497" mass="57429">MTVFLSFAFLAAILTHIGCSNQRRSPENGGRRYNRIQHGQCAYTFILPEHDGNCRESTTDQYNTNALQRDAPHVEQDFSSQKLQHLEHVMENYTQWLQKIENYIVENMKSEMAQIQQNAVQNHTATMLEIGTSLLSQTAEQTRKLTDVETQVLNQTSRLEIQLLENSLSTYKLEKQLLQQTNEILKIHEKNSLLEHKIFEMEGKHKEELDTLKEEKENLQGLVTRQTYIIQELEKQLNRATTNNSVLQKQQLELMDTVHNLVNLCTKEVLLKGGKKEEEKPFRDCADVYQAGFNKSGIYTIYINNMPEPKKVFCNMDLNGGGWTVIQHREDGSLDFQRGWKEYKMGFGNPSGEYWLGNEFIFAITSQRQYTLRIELLDWEGNRAYSQYDRFHIGNEKQNYRLYLKGHTGTAGKQSSLILHGADFSTKDADNDNCMCKCALMLTGGWWFDACGPSNLNGMFYTAGQNHGKLNGIKWHYFKGPSYSLRSTTMMIRPLDF</sequence>
<name>ANGP1_BOVIN</name>
<protein>
    <recommendedName>
        <fullName>Angiopoietin-1</fullName>
        <shortName>ANG-1</shortName>
    </recommendedName>
</protein>
<dbReference type="EMBL" id="BC123628">
    <property type="protein sequence ID" value="AAI23629.1"/>
    <property type="molecule type" value="mRNA"/>
</dbReference>
<dbReference type="EMBL" id="AF093573">
    <property type="protein sequence ID" value="AAC61872.1"/>
    <property type="molecule type" value="mRNA"/>
</dbReference>
<dbReference type="EMBL" id="AF032923">
    <property type="protein sequence ID" value="AAC78245.1"/>
    <property type="molecule type" value="mRNA"/>
</dbReference>
<dbReference type="RefSeq" id="NP_001070265.1">
    <property type="nucleotide sequence ID" value="NM_001076797.1"/>
</dbReference>
<dbReference type="SMR" id="O18920"/>
<dbReference type="FunCoup" id="O18920">
    <property type="interactions" value="588"/>
</dbReference>
<dbReference type="STRING" id="9913.ENSBTAP00000018675"/>
<dbReference type="GlyCosmos" id="O18920">
    <property type="glycosylation" value="5 sites, No reported glycans"/>
</dbReference>
<dbReference type="GlyGen" id="O18920">
    <property type="glycosylation" value="5 sites"/>
</dbReference>
<dbReference type="GeneID" id="282140"/>
<dbReference type="KEGG" id="bta:282140"/>
<dbReference type="CTD" id="284"/>
<dbReference type="VEuPathDB" id="HostDB:ENSBTAG00000014051"/>
<dbReference type="eggNOG" id="KOG2579">
    <property type="taxonomic scope" value="Eukaryota"/>
</dbReference>
<dbReference type="InParanoid" id="O18920"/>
<dbReference type="OMA" id="QYNANAL"/>
<dbReference type="OrthoDB" id="7735366at2759"/>
<dbReference type="Reactome" id="R-BTA-210993">
    <property type="pathway name" value="Tie2 Signaling"/>
</dbReference>
<dbReference type="Reactome" id="R-BTA-5673001">
    <property type="pathway name" value="RAF/MAP kinase cascade"/>
</dbReference>
<dbReference type="Proteomes" id="UP000009136">
    <property type="component" value="Chromosome 14"/>
</dbReference>
<dbReference type="Bgee" id="ENSBTAG00000014051">
    <property type="expression patterns" value="Expressed in adenohypophysis and 91 other cell types or tissues"/>
</dbReference>
<dbReference type="GO" id="GO:0062023">
    <property type="term" value="C:collagen-containing extracellular matrix"/>
    <property type="evidence" value="ECO:0000318"/>
    <property type="project" value="GO_Central"/>
</dbReference>
<dbReference type="GO" id="GO:0005615">
    <property type="term" value="C:extracellular space"/>
    <property type="evidence" value="ECO:0000318"/>
    <property type="project" value="GO_Central"/>
</dbReference>
<dbReference type="GO" id="GO:0030971">
    <property type="term" value="F:receptor tyrosine kinase binding"/>
    <property type="evidence" value="ECO:0000318"/>
    <property type="project" value="GO_Central"/>
</dbReference>
<dbReference type="GO" id="GO:0001525">
    <property type="term" value="P:angiogenesis"/>
    <property type="evidence" value="ECO:0000318"/>
    <property type="project" value="GO_Central"/>
</dbReference>
<dbReference type="GO" id="GO:0007596">
    <property type="term" value="P:blood coagulation"/>
    <property type="evidence" value="ECO:0007669"/>
    <property type="project" value="InterPro"/>
</dbReference>
<dbReference type="GO" id="GO:0030154">
    <property type="term" value="P:cell differentiation"/>
    <property type="evidence" value="ECO:0007669"/>
    <property type="project" value="UniProtKB-KW"/>
</dbReference>
<dbReference type="GO" id="GO:0048014">
    <property type="term" value="P:Tie signaling pathway"/>
    <property type="evidence" value="ECO:0000318"/>
    <property type="project" value="GO_Central"/>
</dbReference>
<dbReference type="CDD" id="cd00087">
    <property type="entry name" value="FReD"/>
    <property type="match status" value="1"/>
</dbReference>
<dbReference type="FunFam" id="3.90.215.10:FF:000005">
    <property type="entry name" value="angiopoietin-1 isoform X2"/>
    <property type="match status" value="1"/>
</dbReference>
<dbReference type="FunFam" id="4.10.530.10:FF:000001">
    <property type="entry name" value="angiopoietin-2 isoform X1"/>
    <property type="match status" value="1"/>
</dbReference>
<dbReference type="Gene3D" id="3.90.215.10">
    <property type="entry name" value="Gamma Fibrinogen, chain A, domain 1"/>
    <property type="match status" value="1"/>
</dbReference>
<dbReference type="Gene3D" id="4.10.530.10">
    <property type="entry name" value="Gamma-fibrinogen Carboxyl Terminal Fragment, domain 2"/>
    <property type="match status" value="1"/>
</dbReference>
<dbReference type="InterPro" id="IPR037579">
    <property type="entry name" value="FIB_ANG-like"/>
</dbReference>
<dbReference type="InterPro" id="IPR036056">
    <property type="entry name" value="Fibrinogen-like_C"/>
</dbReference>
<dbReference type="InterPro" id="IPR014716">
    <property type="entry name" value="Fibrinogen_a/b/g_C_1"/>
</dbReference>
<dbReference type="InterPro" id="IPR002181">
    <property type="entry name" value="Fibrinogen_a/b/g_C_dom"/>
</dbReference>
<dbReference type="InterPro" id="IPR020837">
    <property type="entry name" value="Fibrinogen_CS"/>
</dbReference>
<dbReference type="NCBIfam" id="NF040941">
    <property type="entry name" value="GGGWT_bact"/>
    <property type="match status" value="1"/>
</dbReference>
<dbReference type="PANTHER" id="PTHR47221">
    <property type="entry name" value="FIBRINOGEN ALPHA CHAIN"/>
    <property type="match status" value="1"/>
</dbReference>
<dbReference type="PANTHER" id="PTHR47221:SF6">
    <property type="entry name" value="FIBRINOGEN ALPHA CHAIN"/>
    <property type="match status" value="1"/>
</dbReference>
<dbReference type="Pfam" id="PF25443">
    <property type="entry name" value="ANG-1"/>
    <property type="match status" value="1"/>
</dbReference>
<dbReference type="Pfam" id="PF00147">
    <property type="entry name" value="Fibrinogen_C"/>
    <property type="match status" value="1"/>
</dbReference>
<dbReference type="SMART" id="SM00186">
    <property type="entry name" value="FBG"/>
    <property type="match status" value="1"/>
</dbReference>
<dbReference type="SUPFAM" id="SSF56496">
    <property type="entry name" value="Fibrinogen C-terminal domain-like"/>
    <property type="match status" value="1"/>
</dbReference>
<dbReference type="PROSITE" id="PS00514">
    <property type="entry name" value="FIBRINOGEN_C_1"/>
    <property type="match status" value="1"/>
</dbReference>
<dbReference type="PROSITE" id="PS51406">
    <property type="entry name" value="FIBRINOGEN_C_2"/>
    <property type="match status" value="1"/>
</dbReference>
<proteinExistence type="evidence at transcript level"/>
<accession>O18920</accession>
<accession>Q08DP8</accession>
<keyword id="KW-0037">Angiogenesis</keyword>
<keyword id="KW-0175">Coiled coil</keyword>
<keyword id="KW-0217">Developmental protein</keyword>
<keyword id="KW-0221">Differentiation</keyword>
<keyword id="KW-1015">Disulfide bond</keyword>
<keyword id="KW-0325">Glycoprotein</keyword>
<keyword id="KW-1185">Reference proteome</keyword>
<keyword id="KW-0964">Secreted</keyword>
<keyword id="KW-0732">Signal</keyword>
<evidence type="ECO:0000250" key="1"/>
<evidence type="ECO:0000250" key="2">
    <source>
        <dbReference type="UniProtKB" id="O08538"/>
    </source>
</evidence>
<evidence type="ECO:0000250" key="3">
    <source>
        <dbReference type="UniProtKB" id="Q15389"/>
    </source>
</evidence>
<evidence type="ECO:0000255" key="4"/>
<evidence type="ECO:0000255" key="5">
    <source>
        <dbReference type="PROSITE-ProRule" id="PRU00739"/>
    </source>
</evidence>
<evidence type="ECO:0000269" key="6">
    <source>
    </source>
</evidence>
<evidence type="ECO:0000305" key="7"/>
<reference key="1">
    <citation type="submission" date="2006-09" db="EMBL/GenBank/DDBJ databases">
        <authorList>
            <consortium name="NIH - Mammalian Gene Collection (MGC) project"/>
        </authorList>
    </citation>
    <scope>NUCLEOTIDE SEQUENCE [LARGE SCALE MRNA]</scope>
    <source>
        <strain>Hereford</strain>
        <tissue>Fetal muscle</tissue>
    </source>
</reference>
<reference key="2">
    <citation type="journal article" date="1998" name="Lab. Invest.">
        <title>Analysis of blood vessel maturation processes during cyclic ovarian angiogenesis.</title>
        <authorList>
            <person name="Goede V."/>
            <person name="Schmidt T."/>
            <person name="Kimmina S."/>
            <person name="Kozian D."/>
            <person name="Augustin H.G."/>
        </authorList>
    </citation>
    <scope>NUCLEOTIDE SEQUENCE [MRNA] OF 1-481</scope>
    <scope>TISSUE SPECIFICITY</scope>
    <source>
        <tissue>Ovary</tissue>
    </source>
</reference>
<reference key="3">
    <citation type="journal article" date="1998" name="Circ. Res.">
        <title>Regulation of angiopoietin-2 mRNA levels in bovine microvascular endothelial cells by cytokines and hypoxia.</title>
        <authorList>
            <person name="Mandriota S.J."/>
            <person name="Pepper M.S."/>
        </authorList>
    </citation>
    <scope>NUCLEOTIDE SEQUENCE [MRNA] OF 91-200</scope>
    <source>
        <tissue>Liver</tissue>
    </source>
</reference>